<accession>A8ERT8</accession>
<evidence type="ECO:0000255" key="1">
    <source>
        <dbReference type="HAMAP-Rule" id="MF_00087"/>
    </source>
</evidence>
<comment type="function">
    <text evidence="1">Catalyzes the NADPH-dependent reduction of glutamyl-tRNA(Glu) to glutamate 1-semialdehyde (GSA).</text>
</comment>
<comment type="catalytic activity">
    <reaction evidence="1">
        <text>(S)-4-amino-5-oxopentanoate + tRNA(Glu) + NADP(+) = L-glutamyl-tRNA(Glu) + NADPH + H(+)</text>
        <dbReference type="Rhea" id="RHEA:12344"/>
        <dbReference type="Rhea" id="RHEA-COMP:9663"/>
        <dbReference type="Rhea" id="RHEA-COMP:9680"/>
        <dbReference type="ChEBI" id="CHEBI:15378"/>
        <dbReference type="ChEBI" id="CHEBI:57501"/>
        <dbReference type="ChEBI" id="CHEBI:57783"/>
        <dbReference type="ChEBI" id="CHEBI:58349"/>
        <dbReference type="ChEBI" id="CHEBI:78442"/>
        <dbReference type="ChEBI" id="CHEBI:78520"/>
        <dbReference type="EC" id="1.2.1.70"/>
    </reaction>
</comment>
<comment type="pathway">
    <text evidence="1">Porphyrin-containing compound metabolism; protoporphyrin-IX biosynthesis; 5-aminolevulinate from L-glutamyl-tRNA(Glu): step 1/2.</text>
</comment>
<comment type="subunit">
    <text evidence="1">Homodimer.</text>
</comment>
<comment type="domain">
    <text evidence="1">Possesses an unusual extended V-shaped dimeric structure with each monomer consisting of three distinct domains arranged along a curved 'spinal' alpha-helix. The N-terminal catalytic domain specifically recognizes the glutamate moiety of the substrate. The second domain is the NADPH-binding domain, and the third C-terminal domain is responsible for dimerization.</text>
</comment>
<comment type="miscellaneous">
    <text evidence="1">During catalysis, the active site Cys acts as a nucleophile attacking the alpha-carbonyl group of tRNA-bound glutamate with the formation of a thioester intermediate between enzyme and glutamate, and the concomitant release of tRNA(Glu). The thioester intermediate is finally reduced by direct hydride transfer from NADPH, to form the product GSA.</text>
</comment>
<comment type="similarity">
    <text evidence="1">Belongs to the glutamyl-tRNA reductase family.</text>
</comment>
<name>HEM1_ALIB4</name>
<keyword id="KW-0521">NADP</keyword>
<keyword id="KW-0560">Oxidoreductase</keyword>
<keyword id="KW-0627">Porphyrin biosynthesis</keyword>
<keyword id="KW-1185">Reference proteome</keyword>
<gene>
    <name evidence="1" type="primary">hemA</name>
    <name type="ordered locus">Abu_0387</name>
</gene>
<dbReference type="EC" id="1.2.1.70" evidence="1"/>
<dbReference type="EMBL" id="CP000361">
    <property type="protein sequence ID" value="ABV66662.1"/>
    <property type="molecule type" value="Genomic_DNA"/>
</dbReference>
<dbReference type="RefSeq" id="WP_012012216.1">
    <property type="nucleotide sequence ID" value="NC_009850.1"/>
</dbReference>
<dbReference type="SMR" id="A8ERT8"/>
<dbReference type="STRING" id="367737.Abu_0387"/>
<dbReference type="GeneID" id="24305056"/>
<dbReference type="KEGG" id="abu:Abu_0387"/>
<dbReference type="eggNOG" id="COG0373">
    <property type="taxonomic scope" value="Bacteria"/>
</dbReference>
<dbReference type="HOGENOM" id="CLU_035113_2_2_7"/>
<dbReference type="UniPathway" id="UPA00251">
    <property type="reaction ID" value="UER00316"/>
</dbReference>
<dbReference type="Proteomes" id="UP000001136">
    <property type="component" value="Chromosome"/>
</dbReference>
<dbReference type="GO" id="GO:0008883">
    <property type="term" value="F:glutamyl-tRNA reductase activity"/>
    <property type="evidence" value="ECO:0007669"/>
    <property type="project" value="UniProtKB-UniRule"/>
</dbReference>
<dbReference type="GO" id="GO:0050661">
    <property type="term" value="F:NADP binding"/>
    <property type="evidence" value="ECO:0007669"/>
    <property type="project" value="InterPro"/>
</dbReference>
<dbReference type="GO" id="GO:0019353">
    <property type="term" value="P:protoporphyrinogen IX biosynthetic process from glutamate"/>
    <property type="evidence" value="ECO:0007669"/>
    <property type="project" value="TreeGrafter"/>
</dbReference>
<dbReference type="CDD" id="cd05213">
    <property type="entry name" value="NAD_bind_Glutamyl_tRNA_reduct"/>
    <property type="match status" value="1"/>
</dbReference>
<dbReference type="FunFam" id="3.30.460.30:FF:000001">
    <property type="entry name" value="Glutamyl-tRNA reductase"/>
    <property type="match status" value="1"/>
</dbReference>
<dbReference type="Gene3D" id="3.30.460.30">
    <property type="entry name" value="Glutamyl-tRNA reductase, N-terminal domain"/>
    <property type="match status" value="1"/>
</dbReference>
<dbReference type="Gene3D" id="3.40.50.720">
    <property type="entry name" value="NAD(P)-binding Rossmann-like Domain"/>
    <property type="match status" value="1"/>
</dbReference>
<dbReference type="HAMAP" id="MF_00087">
    <property type="entry name" value="Glu_tRNA_reductase"/>
    <property type="match status" value="1"/>
</dbReference>
<dbReference type="InterPro" id="IPR000343">
    <property type="entry name" value="4pyrrol_synth_GluRdtase"/>
</dbReference>
<dbReference type="InterPro" id="IPR015896">
    <property type="entry name" value="4pyrrol_synth_GluRdtase_dimer"/>
</dbReference>
<dbReference type="InterPro" id="IPR015895">
    <property type="entry name" value="4pyrrol_synth_GluRdtase_N"/>
</dbReference>
<dbReference type="InterPro" id="IPR018214">
    <property type="entry name" value="GluRdtase_CS"/>
</dbReference>
<dbReference type="InterPro" id="IPR036453">
    <property type="entry name" value="GluRdtase_dimer_dom_sf"/>
</dbReference>
<dbReference type="InterPro" id="IPR036343">
    <property type="entry name" value="GluRdtase_N_sf"/>
</dbReference>
<dbReference type="InterPro" id="IPR036291">
    <property type="entry name" value="NAD(P)-bd_dom_sf"/>
</dbReference>
<dbReference type="InterPro" id="IPR006151">
    <property type="entry name" value="Shikm_DH/Glu-tRNA_Rdtase"/>
</dbReference>
<dbReference type="NCBIfam" id="TIGR01035">
    <property type="entry name" value="hemA"/>
    <property type="match status" value="1"/>
</dbReference>
<dbReference type="PANTHER" id="PTHR43013">
    <property type="entry name" value="GLUTAMYL-TRNA REDUCTASE"/>
    <property type="match status" value="1"/>
</dbReference>
<dbReference type="PANTHER" id="PTHR43013:SF1">
    <property type="entry name" value="GLUTAMYL-TRNA REDUCTASE"/>
    <property type="match status" value="1"/>
</dbReference>
<dbReference type="Pfam" id="PF00745">
    <property type="entry name" value="GlutR_dimer"/>
    <property type="match status" value="1"/>
</dbReference>
<dbReference type="Pfam" id="PF05201">
    <property type="entry name" value="GlutR_N"/>
    <property type="match status" value="1"/>
</dbReference>
<dbReference type="Pfam" id="PF01488">
    <property type="entry name" value="Shikimate_DH"/>
    <property type="match status" value="1"/>
</dbReference>
<dbReference type="PIRSF" id="PIRSF000445">
    <property type="entry name" value="4pyrrol_synth_GluRdtase"/>
    <property type="match status" value="1"/>
</dbReference>
<dbReference type="SUPFAM" id="SSF69742">
    <property type="entry name" value="Glutamyl tRNA-reductase catalytic, N-terminal domain"/>
    <property type="match status" value="1"/>
</dbReference>
<dbReference type="SUPFAM" id="SSF69075">
    <property type="entry name" value="Glutamyl tRNA-reductase dimerization domain"/>
    <property type="match status" value="1"/>
</dbReference>
<dbReference type="SUPFAM" id="SSF51735">
    <property type="entry name" value="NAD(P)-binding Rossmann-fold domains"/>
    <property type="match status" value="1"/>
</dbReference>
<dbReference type="PROSITE" id="PS00747">
    <property type="entry name" value="GLUTR"/>
    <property type="match status" value="1"/>
</dbReference>
<reference key="1">
    <citation type="journal article" date="2007" name="PLoS ONE">
        <title>The complete genome sequence and analysis of the Epsilonproteobacterium Arcobacter butzleri.</title>
        <authorList>
            <person name="Miller W.G."/>
            <person name="Parker C.T."/>
            <person name="Rubenfield M."/>
            <person name="Mendz G.L."/>
            <person name="Woesten M.M.S.M."/>
            <person name="Ussery D.W."/>
            <person name="Stolz J.F."/>
            <person name="Binnewies T.T."/>
            <person name="Hallin P.F."/>
            <person name="Wang G."/>
            <person name="Malek J.A."/>
            <person name="Rogosin A."/>
            <person name="Stanker L.H."/>
            <person name="Mandrell R.E."/>
        </authorList>
    </citation>
    <scope>NUCLEOTIDE SEQUENCE [LARGE SCALE GENOMIC DNA]</scope>
    <source>
        <strain>RM4018</strain>
    </source>
</reference>
<sequence>MSYLVISFSHKNTDIKLREKLAFNSDEDKDRFLKLILENDITKEAILLSTCNRVEIITRSLNIKQSSKDIIEKLATYSKVDFDVLYDRADIYDADGAVHHLFSVASALDSLVIGETQIVGQLKDAFRFSQAKGYCSLNITRVMHYAFKCAAQVRTATSLGTGSVSVASTAVSKAKDIIGNTKDVKALVVGAGEMSELTVKHLIASGFDVTIISRDTKKAQNLASTFEVHVNVEPYDKLTQLLITTPIMITATSAPYPIITKENAPSSNINRYWFDIAVPRDIDENISMSNLEIFSVDDLQDIVNENMSLRAEQAKTAYGIVSRMSLEFFEWLKSLEIEPIVKNLYLKGNEIIDKKVKNAIKKGFIDSKDEENIRKLCLTVITEYLHNPAKQLKDISKNMECDLVVGTVQNMFSLNENSTSKNRYKCDHLSKN</sequence>
<proteinExistence type="inferred from homology"/>
<protein>
    <recommendedName>
        <fullName evidence="1">Glutamyl-tRNA reductase</fullName>
        <shortName evidence="1">GluTR</shortName>
        <ecNumber evidence="1">1.2.1.70</ecNumber>
    </recommendedName>
</protein>
<feature type="chain" id="PRO_1000057569" description="Glutamyl-tRNA reductase">
    <location>
        <begin position="1"/>
        <end position="432"/>
    </location>
</feature>
<feature type="active site" description="Nucleophile" evidence="1">
    <location>
        <position position="51"/>
    </location>
</feature>
<feature type="binding site" evidence="1">
    <location>
        <begin position="50"/>
        <end position="53"/>
    </location>
    <ligand>
        <name>substrate</name>
    </ligand>
</feature>
<feature type="binding site" evidence="1">
    <location>
        <position position="110"/>
    </location>
    <ligand>
        <name>substrate</name>
    </ligand>
</feature>
<feature type="binding site" evidence="1">
    <location>
        <begin position="115"/>
        <end position="117"/>
    </location>
    <ligand>
        <name>substrate</name>
    </ligand>
</feature>
<feature type="binding site" evidence="1">
    <location>
        <position position="121"/>
    </location>
    <ligand>
        <name>substrate</name>
    </ligand>
</feature>
<feature type="binding site" evidence="1">
    <location>
        <begin position="190"/>
        <end position="195"/>
    </location>
    <ligand>
        <name>NADP(+)</name>
        <dbReference type="ChEBI" id="CHEBI:58349"/>
    </ligand>
</feature>
<feature type="site" description="Important for activity" evidence="1">
    <location>
        <position position="100"/>
    </location>
</feature>
<organism>
    <name type="scientific">Aliarcobacter butzleri (strain RM4018)</name>
    <name type="common">Arcobacter butzleri</name>
    <dbReference type="NCBI Taxonomy" id="367737"/>
    <lineage>
        <taxon>Bacteria</taxon>
        <taxon>Pseudomonadati</taxon>
        <taxon>Campylobacterota</taxon>
        <taxon>Epsilonproteobacteria</taxon>
        <taxon>Campylobacterales</taxon>
        <taxon>Arcobacteraceae</taxon>
        <taxon>Aliarcobacter</taxon>
    </lineage>
</organism>